<reference key="1">
    <citation type="submission" date="2008-05" db="EMBL/GenBank/DDBJ databases">
        <title>Complete sequence of chromosome of Geobacter lovleyi SZ.</title>
        <authorList>
            <consortium name="US DOE Joint Genome Institute"/>
            <person name="Lucas S."/>
            <person name="Copeland A."/>
            <person name="Lapidus A."/>
            <person name="Glavina del Rio T."/>
            <person name="Dalin E."/>
            <person name="Tice H."/>
            <person name="Bruce D."/>
            <person name="Goodwin L."/>
            <person name="Pitluck S."/>
            <person name="Chertkov O."/>
            <person name="Meincke L."/>
            <person name="Brettin T."/>
            <person name="Detter J.C."/>
            <person name="Han C."/>
            <person name="Tapia R."/>
            <person name="Kuske C.R."/>
            <person name="Schmutz J."/>
            <person name="Larimer F."/>
            <person name="Land M."/>
            <person name="Hauser L."/>
            <person name="Kyrpides N."/>
            <person name="Mikhailova N."/>
            <person name="Sung Y."/>
            <person name="Fletcher K.E."/>
            <person name="Ritalahti K.M."/>
            <person name="Loeffler F.E."/>
            <person name="Richardson P."/>
        </authorList>
    </citation>
    <scope>NUCLEOTIDE SEQUENCE [LARGE SCALE GENOMIC DNA]</scope>
    <source>
        <strain>ATCC BAA-1151 / DSM 17278 / SZ</strain>
    </source>
</reference>
<organism>
    <name type="scientific">Trichlorobacter lovleyi (strain ATCC BAA-1151 / DSM 17278 / SZ)</name>
    <name type="common">Geobacter lovleyi</name>
    <dbReference type="NCBI Taxonomy" id="398767"/>
    <lineage>
        <taxon>Bacteria</taxon>
        <taxon>Pseudomonadati</taxon>
        <taxon>Thermodesulfobacteriota</taxon>
        <taxon>Desulfuromonadia</taxon>
        <taxon>Geobacterales</taxon>
        <taxon>Geobacteraceae</taxon>
        <taxon>Trichlorobacter</taxon>
    </lineage>
</organism>
<gene>
    <name evidence="1" type="primary">nadD</name>
    <name type="ordered locus">Glov_3632</name>
</gene>
<feature type="chain" id="PRO_1000100778" description="Probable nicotinate-nucleotide adenylyltransferase">
    <location>
        <begin position="1"/>
        <end position="213"/>
    </location>
</feature>
<comment type="function">
    <text evidence="1">Catalyzes the reversible adenylation of nicotinate mononucleotide (NaMN) to nicotinic acid adenine dinucleotide (NaAD).</text>
</comment>
<comment type="catalytic activity">
    <reaction evidence="1">
        <text>nicotinate beta-D-ribonucleotide + ATP + H(+) = deamido-NAD(+) + diphosphate</text>
        <dbReference type="Rhea" id="RHEA:22860"/>
        <dbReference type="ChEBI" id="CHEBI:15378"/>
        <dbReference type="ChEBI" id="CHEBI:30616"/>
        <dbReference type="ChEBI" id="CHEBI:33019"/>
        <dbReference type="ChEBI" id="CHEBI:57502"/>
        <dbReference type="ChEBI" id="CHEBI:58437"/>
        <dbReference type="EC" id="2.7.7.18"/>
    </reaction>
</comment>
<comment type="pathway">
    <text evidence="1">Cofactor biosynthesis; NAD(+) biosynthesis; deamido-NAD(+) from nicotinate D-ribonucleotide: step 1/1.</text>
</comment>
<comment type="similarity">
    <text evidence="1">Belongs to the NadD family.</text>
</comment>
<proteinExistence type="inferred from homology"/>
<protein>
    <recommendedName>
        <fullName evidence="1">Probable nicotinate-nucleotide adenylyltransferase</fullName>
        <ecNumber evidence="1">2.7.7.18</ecNumber>
    </recommendedName>
    <alternativeName>
        <fullName evidence="1">Deamido-NAD(+) diphosphorylase</fullName>
    </alternativeName>
    <alternativeName>
        <fullName evidence="1">Deamido-NAD(+) pyrophosphorylase</fullName>
    </alternativeName>
    <alternativeName>
        <fullName evidence="1">Nicotinate mononucleotide adenylyltransferase</fullName>
        <shortName evidence="1">NaMN adenylyltransferase</shortName>
    </alternativeName>
</protein>
<sequence>MKLGLLGGTFNPIHLAHLRIAEEAREAAGLDQVLFIPAADPPHKPLAGDVSFELRAAMVQRAIAANPAFRFSDIEAHRAGKSYTVDTLTALRTARPGDELHFIIGSDSFLELGLWHRYADIFPLASLIVLERPEKAITEPLQQLPELVRDQFVQEAGNLVRHSSGTSIRFVIGTRLDISSSQLRERVARQQSIRYLVPPEIESFITQKGLYQP</sequence>
<dbReference type="EC" id="2.7.7.18" evidence="1"/>
<dbReference type="EMBL" id="CP001089">
    <property type="protein sequence ID" value="ACD97332.1"/>
    <property type="molecule type" value="Genomic_DNA"/>
</dbReference>
<dbReference type="RefSeq" id="WP_012471650.1">
    <property type="nucleotide sequence ID" value="NC_010814.1"/>
</dbReference>
<dbReference type="SMR" id="B3E3R0"/>
<dbReference type="STRING" id="398767.Glov_3632"/>
<dbReference type="KEGG" id="glo:Glov_3632"/>
<dbReference type="eggNOG" id="COG1057">
    <property type="taxonomic scope" value="Bacteria"/>
</dbReference>
<dbReference type="HOGENOM" id="CLU_069765_3_1_7"/>
<dbReference type="OrthoDB" id="5295945at2"/>
<dbReference type="UniPathway" id="UPA00253">
    <property type="reaction ID" value="UER00332"/>
</dbReference>
<dbReference type="Proteomes" id="UP000002420">
    <property type="component" value="Chromosome"/>
</dbReference>
<dbReference type="GO" id="GO:0005524">
    <property type="term" value="F:ATP binding"/>
    <property type="evidence" value="ECO:0007669"/>
    <property type="project" value="UniProtKB-KW"/>
</dbReference>
<dbReference type="GO" id="GO:0004515">
    <property type="term" value="F:nicotinate-nucleotide adenylyltransferase activity"/>
    <property type="evidence" value="ECO:0007669"/>
    <property type="project" value="UniProtKB-UniRule"/>
</dbReference>
<dbReference type="GO" id="GO:0009435">
    <property type="term" value="P:NAD biosynthetic process"/>
    <property type="evidence" value="ECO:0007669"/>
    <property type="project" value="UniProtKB-UniRule"/>
</dbReference>
<dbReference type="CDD" id="cd02165">
    <property type="entry name" value="NMNAT"/>
    <property type="match status" value="1"/>
</dbReference>
<dbReference type="Gene3D" id="3.40.50.620">
    <property type="entry name" value="HUPs"/>
    <property type="match status" value="1"/>
</dbReference>
<dbReference type="HAMAP" id="MF_00244">
    <property type="entry name" value="NaMN_adenylyltr"/>
    <property type="match status" value="1"/>
</dbReference>
<dbReference type="InterPro" id="IPR004821">
    <property type="entry name" value="Cyt_trans-like"/>
</dbReference>
<dbReference type="InterPro" id="IPR005248">
    <property type="entry name" value="NadD/NMNAT"/>
</dbReference>
<dbReference type="InterPro" id="IPR014729">
    <property type="entry name" value="Rossmann-like_a/b/a_fold"/>
</dbReference>
<dbReference type="NCBIfam" id="TIGR00125">
    <property type="entry name" value="cyt_tran_rel"/>
    <property type="match status" value="1"/>
</dbReference>
<dbReference type="NCBIfam" id="TIGR00482">
    <property type="entry name" value="nicotinate (nicotinamide) nucleotide adenylyltransferase"/>
    <property type="match status" value="1"/>
</dbReference>
<dbReference type="NCBIfam" id="NF000840">
    <property type="entry name" value="PRK00071.1-3"/>
    <property type="match status" value="1"/>
</dbReference>
<dbReference type="PANTHER" id="PTHR39321">
    <property type="entry name" value="NICOTINATE-NUCLEOTIDE ADENYLYLTRANSFERASE-RELATED"/>
    <property type="match status" value="1"/>
</dbReference>
<dbReference type="PANTHER" id="PTHR39321:SF3">
    <property type="entry name" value="PHOSPHOPANTETHEINE ADENYLYLTRANSFERASE"/>
    <property type="match status" value="1"/>
</dbReference>
<dbReference type="Pfam" id="PF01467">
    <property type="entry name" value="CTP_transf_like"/>
    <property type="match status" value="1"/>
</dbReference>
<dbReference type="SUPFAM" id="SSF52374">
    <property type="entry name" value="Nucleotidylyl transferase"/>
    <property type="match status" value="1"/>
</dbReference>
<keyword id="KW-0067">ATP-binding</keyword>
<keyword id="KW-0520">NAD</keyword>
<keyword id="KW-0547">Nucleotide-binding</keyword>
<keyword id="KW-0548">Nucleotidyltransferase</keyword>
<keyword id="KW-0662">Pyridine nucleotide biosynthesis</keyword>
<keyword id="KW-1185">Reference proteome</keyword>
<keyword id="KW-0808">Transferase</keyword>
<evidence type="ECO:0000255" key="1">
    <source>
        <dbReference type="HAMAP-Rule" id="MF_00244"/>
    </source>
</evidence>
<accession>B3E3R0</accession>
<name>NADD_TRIL1</name>